<protein>
    <recommendedName>
        <fullName evidence="2">Protein DETOXIFICATION 9</fullName>
        <shortName evidence="2">AtDTX9</shortName>
    </recommendedName>
    <alternativeName>
        <fullName evidence="3">Multidrug and toxic compound extrusion protein 9</fullName>
        <shortName evidence="3">MATE protein 9</shortName>
    </alternativeName>
</protein>
<sequence>MKKSIETPLLLNTKQSQDEDKEKIRWEKMKKVASMAAPMVAVNMSQYLLQATSTMIVGHRSELALAGIALGSSFANVTGFGVLFGLSGSLETLCGQAYGAKQYHKLGSYTFTSIVFLLIISVPISILWMFMNQILLLLHQDPQIAELAGVYCLWLVPALFGYSVLESLVRYFQSQSLIYPMVLSSLAALSFHVPLCWLMVHKFDFGAKGAAASIGISYWLNAVFLWVYMKRSSRCVETRIYMSKDVFVHTNIFFQFAIPSAMMCCLEWLAFEVITLLSGLLPNSKLETSVISICLTTSSLHYNLVNGIGDAASTNVANELGAGNPRGARDSAAAAIIIAAVESVIVSSSLFLSRSVWPYAYSNVEEVISYVTDITPILCISILMDSFLTVLSGIVRGTGWQKIGAYVNITSYYVIGIPVGLLLCFHLHFNGKGLWAGLVTGSTLQTLILFLVIGFTNWSKEAIKARERIGDEKVWRHDSLLN</sequence>
<organism>
    <name type="scientific">Arabidopsis thaliana</name>
    <name type="common">Mouse-ear cress</name>
    <dbReference type="NCBI Taxonomy" id="3702"/>
    <lineage>
        <taxon>Eukaryota</taxon>
        <taxon>Viridiplantae</taxon>
        <taxon>Streptophyta</taxon>
        <taxon>Embryophyta</taxon>
        <taxon>Tracheophyta</taxon>
        <taxon>Spermatophyta</taxon>
        <taxon>Magnoliopsida</taxon>
        <taxon>eudicotyledons</taxon>
        <taxon>Gunneridae</taxon>
        <taxon>Pentapetalae</taxon>
        <taxon>rosids</taxon>
        <taxon>malvids</taxon>
        <taxon>Brassicales</taxon>
        <taxon>Brassicaceae</taxon>
        <taxon>Camelineae</taxon>
        <taxon>Arabidopsis</taxon>
    </lineage>
</organism>
<keyword id="KW-0025">Alternative splicing</keyword>
<keyword id="KW-0472">Membrane</keyword>
<keyword id="KW-1185">Reference proteome</keyword>
<keyword id="KW-0812">Transmembrane</keyword>
<keyword id="KW-1133">Transmembrane helix</keyword>
<keyword id="KW-0813">Transport</keyword>
<reference key="1">
    <citation type="journal article" date="2000" name="Nature">
        <title>Sequence and analysis of chromosome 1 of the plant Arabidopsis thaliana.</title>
        <authorList>
            <person name="Theologis A."/>
            <person name="Ecker J.R."/>
            <person name="Palm C.J."/>
            <person name="Federspiel N.A."/>
            <person name="Kaul S."/>
            <person name="White O."/>
            <person name="Alonso J."/>
            <person name="Altafi H."/>
            <person name="Araujo R."/>
            <person name="Bowman C.L."/>
            <person name="Brooks S.Y."/>
            <person name="Buehler E."/>
            <person name="Chan A."/>
            <person name="Chao Q."/>
            <person name="Chen H."/>
            <person name="Cheuk R.F."/>
            <person name="Chin C.W."/>
            <person name="Chung M.K."/>
            <person name="Conn L."/>
            <person name="Conway A.B."/>
            <person name="Conway A.R."/>
            <person name="Creasy T.H."/>
            <person name="Dewar K."/>
            <person name="Dunn P."/>
            <person name="Etgu P."/>
            <person name="Feldblyum T.V."/>
            <person name="Feng J.-D."/>
            <person name="Fong B."/>
            <person name="Fujii C.Y."/>
            <person name="Gill J.E."/>
            <person name="Goldsmith A.D."/>
            <person name="Haas B."/>
            <person name="Hansen N.F."/>
            <person name="Hughes B."/>
            <person name="Huizar L."/>
            <person name="Hunter J.L."/>
            <person name="Jenkins J."/>
            <person name="Johnson-Hopson C."/>
            <person name="Khan S."/>
            <person name="Khaykin E."/>
            <person name="Kim C.J."/>
            <person name="Koo H.L."/>
            <person name="Kremenetskaia I."/>
            <person name="Kurtz D.B."/>
            <person name="Kwan A."/>
            <person name="Lam B."/>
            <person name="Langin-Hooper S."/>
            <person name="Lee A."/>
            <person name="Lee J.M."/>
            <person name="Lenz C.A."/>
            <person name="Li J.H."/>
            <person name="Li Y.-P."/>
            <person name="Lin X."/>
            <person name="Liu S.X."/>
            <person name="Liu Z.A."/>
            <person name="Luros J.S."/>
            <person name="Maiti R."/>
            <person name="Marziali A."/>
            <person name="Militscher J."/>
            <person name="Miranda M."/>
            <person name="Nguyen M."/>
            <person name="Nierman W.C."/>
            <person name="Osborne B.I."/>
            <person name="Pai G."/>
            <person name="Peterson J."/>
            <person name="Pham P.K."/>
            <person name="Rizzo M."/>
            <person name="Rooney T."/>
            <person name="Rowley D."/>
            <person name="Sakano H."/>
            <person name="Salzberg S.L."/>
            <person name="Schwartz J.R."/>
            <person name="Shinn P."/>
            <person name="Southwick A.M."/>
            <person name="Sun H."/>
            <person name="Tallon L.J."/>
            <person name="Tambunga G."/>
            <person name="Toriumi M.J."/>
            <person name="Town C.D."/>
            <person name="Utterback T."/>
            <person name="Van Aken S."/>
            <person name="Vaysberg M."/>
            <person name="Vysotskaia V.S."/>
            <person name="Walker M."/>
            <person name="Wu D."/>
            <person name="Yu G."/>
            <person name="Fraser C.M."/>
            <person name="Venter J.C."/>
            <person name="Davis R.W."/>
        </authorList>
    </citation>
    <scope>NUCLEOTIDE SEQUENCE [LARGE SCALE GENOMIC DNA]</scope>
    <source>
        <strain>cv. Columbia</strain>
    </source>
</reference>
<reference key="2">
    <citation type="journal article" date="2017" name="Plant J.">
        <title>Araport11: a complete reannotation of the Arabidopsis thaliana reference genome.</title>
        <authorList>
            <person name="Cheng C.Y."/>
            <person name="Krishnakumar V."/>
            <person name="Chan A.P."/>
            <person name="Thibaud-Nissen F."/>
            <person name="Schobel S."/>
            <person name="Town C.D."/>
        </authorList>
    </citation>
    <scope>GENOME REANNOTATION</scope>
    <source>
        <strain>cv. Columbia</strain>
    </source>
</reference>
<reference key="3">
    <citation type="journal article" date="2003" name="Science">
        <title>Empirical analysis of transcriptional activity in the Arabidopsis genome.</title>
        <authorList>
            <person name="Yamada K."/>
            <person name="Lim J."/>
            <person name="Dale J.M."/>
            <person name="Chen H."/>
            <person name="Shinn P."/>
            <person name="Palm C.J."/>
            <person name="Southwick A.M."/>
            <person name="Wu H.C."/>
            <person name="Kim C.J."/>
            <person name="Nguyen M."/>
            <person name="Pham P.K."/>
            <person name="Cheuk R.F."/>
            <person name="Karlin-Newmann G."/>
            <person name="Liu S.X."/>
            <person name="Lam B."/>
            <person name="Sakano H."/>
            <person name="Wu T."/>
            <person name="Yu G."/>
            <person name="Miranda M."/>
            <person name="Quach H.L."/>
            <person name="Tripp M."/>
            <person name="Chang C.H."/>
            <person name="Lee J.M."/>
            <person name="Toriumi M.J."/>
            <person name="Chan M.M."/>
            <person name="Tang C.C."/>
            <person name="Onodera C.S."/>
            <person name="Deng J.M."/>
            <person name="Akiyama K."/>
            <person name="Ansari Y."/>
            <person name="Arakawa T."/>
            <person name="Banh J."/>
            <person name="Banno F."/>
            <person name="Bowser L."/>
            <person name="Brooks S.Y."/>
            <person name="Carninci P."/>
            <person name="Chao Q."/>
            <person name="Choy N."/>
            <person name="Enju A."/>
            <person name="Goldsmith A.D."/>
            <person name="Gurjal M."/>
            <person name="Hansen N.F."/>
            <person name="Hayashizaki Y."/>
            <person name="Johnson-Hopson C."/>
            <person name="Hsuan V.W."/>
            <person name="Iida K."/>
            <person name="Karnes M."/>
            <person name="Khan S."/>
            <person name="Koesema E."/>
            <person name="Ishida J."/>
            <person name="Jiang P.X."/>
            <person name="Jones T."/>
            <person name="Kawai J."/>
            <person name="Kamiya A."/>
            <person name="Meyers C."/>
            <person name="Nakajima M."/>
            <person name="Narusaka M."/>
            <person name="Seki M."/>
            <person name="Sakurai T."/>
            <person name="Satou M."/>
            <person name="Tamse R."/>
            <person name="Vaysberg M."/>
            <person name="Wallender E.K."/>
            <person name="Wong C."/>
            <person name="Yamamura Y."/>
            <person name="Yuan S."/>
            <person name="Shinozaki K."/>
            <person name="Davis R.W."/>
            <person name="Theologis A."/>
            <person name="Ecker J.R."/>
        </authorList>
    </citation>
    <scope>NUCLEOTIDE SEQUENCE [LARGE SCALE MRNA]</scope>
    <source>
        <strain>cv. Columbia</strain>
    </source>
</reference>
<reference key="4">
    <citation type="journal article" date="2002" name="J. Biol. Chem.">
        <title>Functional cloning and characterization of a plant efflux carrier for multidrug and heavy metal detoxification.</title>
        <authorList>
            <person name="Li L."/>
            <person name="He Z."/>
            <person name="Pandey G.K."/>
            <person name="Tsuchiya T."/>
            <person name="Luan S."/>
        </authorList>
    </citation>
    <scope>GENE FAMILY</scope>
    <scope>NOMENCLATURE</scope>
</reference>
<reference key="5">
    <citation type="journal article" date="2003" name="Eur. J. Biochem.">
        <title>The multidrug/oligosaccharidyl-lipid/polysaccharide (MOP) exporter superfamily.</title>
        <authorList>
            <person name="Hvorup R.N."/>
            <person name="Winnen B."/>
            <person name="Chang A.B."/>
            <person name="Jiang Y."/>
            <person name="Zhou X.F."/>
            <person name="Saier M.H. Jr."/>
        </authorList>
    </citation>
    <scope>GENE FAMILY</scope>
</reference>
<dbReference type="EMBL" id="AC013288">
    <property type="protein sequence ID" value="AAG60073.1"/>
    <property type="molecule type" value="Genomic_DNA"/>
</dbReference>
<dbReference type="EMBL" id="CP002684">
    <property type="protein sequence ID" value="AEE34553.1"/>
    <property type="molecule type" value="Genomic_DNA"/>
</dbReference>
<dbReference type="EMBL" id="AF360254">
    <property type="protein sequence ID" value="AAK25964.1"/>
    <property type="molecule type" value="mRNA"/>
</dbReference>
<dbReference type="RefSeq" id="NP_849854.1">
    <molecule id="Q9C9M8-1"/>
    <property type="nucleotide sequence ID" value="NM_179523.4"/>
</dbReference>
<dbReference type="SMR" id="Q9C9M8"/>
<dbReference type="FunCoup" id="Q9C9M8">
    <property type="interactions" value="224"/>
</dbReference>
<dbReference type="IntAct" id="Q9C9M8">
    <property type="interactions" value="10"/>
</dbReference>
<dbReference type="STRING" id="3702.Q9C9M8"/>
<dbReference type="PaxDb" id="3702-AT1G66760.2"/>
<dbReference type="ProteomicsDB" id="220729">
    <molecule id="Q9C9M8-1"/>
</dbReference>
<dbReference type="EnsemblPlants" id="AT1G66760.2">
    <molecule id="Q9C9M8-1"/>
    <property type="protein sequence ID" value="AT1G66760.2"/>
    <property type="gene ID" value="AT1G66760"/>
</dbReference>
<dbReference type="GeneID" id="842994"/>
<dbReference type="Gramene" id="AT1G66760.2">
    <molecule id="Q9C9M8-1"/>
    <property type="protein sequence ID" value="AT1G66760.2"/>
    <property type="gene ID" value="AT1G66760"/>
</dbReference>
<dbReference type="KEGG" id="ath:AT1G66760"/>
<dbReference type="Araport" id="AT1G66760"/>
<dbReference type="TAIR" id="AT1G66760"/>
<dbReference type="eggNOG" id="KOG1347">
    <property type="taxonomic scope" value="Eukaryota"/>
</dbReference>
<dbReference type="HOGENOM" id="CLU_012893_1_0_1"/>
<dbReference type="InParanoid" id="Q9C9M8"/>
<dbReference type="OrthoDB" id="2126698at2759"/>
<dbReference type="PhylomeDB" id="Q9C9M8"/>
<dbReference type="PRO" id="PR:Q9C9M8"/>
<dbReference type="Proteomes" id="UP000006548">
    <property type="component" value="Chromosome 1"/>
</dbReference>
<dbReference type="ExpressionAtlas" id="Q9C9M8">
    <property type="expression patterns" value="baseline and differential"/>
</dbReference>
<dbReference type="GO" id="GO:0016020">
    <property type="term" value="C:membrane"/>
    <property type="evidence" value="ECO:0007669"/>
    <property type="project" value="UniProtKB-SubCell"/>
</dbReference>
<dbReference type="GO" id="GO:0015297">
    <property type="term" value="F:antiporter activity"/>
    <property type="evidence" value="ECO:0007669"/>
    <property type="project" value="InterPro"/>
</dbReference>
<dbReference type="GO" id="GO:0042910">
    <property type="term" value="F:xenobiotic transmembrane transporter activity"/>
    <property type="evidence" value="ECO:0007669"/>
    <property type="project" value="InterPro"/>
</dbReference>
<dbReference type="GO" id="GO:0009611">
    <property type="term" value="P:response to wounding"/>
    <property type="evidence" value="ECO:0000270"/>
    <property type="project" value="TAIR"/>
</dbReference>
<dbReference type="GO" id="GO:1990961">
    <property type="term" value="P:xenobiotic detoxification by transmembrane export across the plasma membrane"/>
    <property type="evidence" value="ECO:0007669"/>
    <property type="project" value="InterPro"/>
</dbReference>
<dbReference type="CDD" id="cd13132">
    <property type="entry name" value="MATE_eukaryotic"/>
    <property type="match status" value="1"/>
</dbReference>
<dbReference type="InterPro" id="IPR045069">
    <property type="entry name" value="MATE_euk"/>
</dbReference>
<dbReference type="InterPro" id="IPR002528">
    <property type="entry name" value="MATE_fam"/>
</dbReference>
<dbReference type="NCBIfam" id="TIGR00797">
    <property type="entry name" value="matE"/>
    <property type="match status" value="1"/>
</dbReference>
<dbReference type="PANTHER" id="PTHR11206">
    <property type="entry name" value="MULTIDRUG RESISTANCE PROTEIN"/>
    <property type="match status" value="1"/>
</dbReference>
<dbReference type="Pfam" id="PF01554">
    <property type="entry name" value="MatE"/>
    <property type="match status" value="2"/>
</dbReference>
<evidence type="ECO:0000255" key="1"/>
<evidence type="ECO:0000303" key="2">
    <source>
    </source>
</evidence>
<evidence type="ECO:0000305" key="3"/>
<evidence type="ECO:0000312" key="4">
    <source>
        <dbReference type="Araport" id="AT1G66760"/>
    </source>
</evidence>
<evidence type="ECO:0000312" key="5">
    <source>
        <dbReference type="EMBL" id="AAG60073.1"/>
    </source>
</evidence>
<comment type="subcellular location">
    <subcellularLocation>
        <location evidence="1">Membrane</location>
        <topology evidence="1">Multi-pass membrane protein</topology>
    </subcellularLocation>
</comment>
<comment type="alternative products">
    <event type="alternative splicing"/>
    <isoform>
        <id>Q9C9M8-1</id>
        <name>1</name>
        <sequence type="displayed"/>
    </isoform>
    <text>A number of isoforms are produced. According to EST sequences.</text>
</comment>
<comment type="similarity">
    <text evidence="3">Belongs to the multi antimicrobial extrusion (MATE) (TC 2.A.66.1) family.</text>
</comment>
<name>DTX9_ARATH</name>
<gene>
    <name evidence="2" type="primary">DTX9</name>
    <name evidence="4" type="ordered locus">At1g66760</name>
    <name evidence="5" type="ORF">F4N21_11</name>
</gene>
<accession>Q9C9M8</accession>
<accession>Q9C5H0</accession>
<feature type="chain" id="PRO_0000434052" description="Protein DETOXIFICATION 9">
    <location>
        <begin position="1"/>
        <end position="482"/>
    </location>
</feature>
<feature type="transmembrane region" description="Helical" evidence="1">
    <location>
        <begin position="32"/>
        <end position="49"/>
    </location>
</feature>
<feature type="transmembrane region" description="Helical" evidence="1">
    <location>
        <begin position="64"/>
        <end position="84"/>
    </location>
</feature>
<feature type="transmembrane region" description="Helical" evidence="1">
    <location>
        <begin position="111"/>
        <end position="131"/>
    </location>
</feature>
<feature type="transmembrane region" description="Helical" evidence="1">
    <location>
        <begin position="144"/>
        <end position="164"/>
    </location>
</feature>
<feature type="transmembrane region" description="Helical" evidence="1">
    <location>
        <begin position="180"/>
        <end position="200"/>
    </location>
</feature>
<feature type="transmembrane region" description="Helical" evidence="1">
    <location>
        <begin position="209"/>
        <end position="229"/>
    </location>
</feature>
<feature type="transmembrane region" description="Helical" evidence="1">
    <location>
        <begin position="261"/>
        <end position="281"/>
    </location>
</feature>
<feature type="transmembrane region" description="Helical" evidence="1">
    <location>
        <begin position="289"/>
        <end position="309"/>
    </location>
</feature>
<feature type="transmembrane region" description="Helical" evidence="1">
    <location>
        <begin position="332"/>
        <end position="352"/>
    </location>
</feature>
<feature type="transmembrane region" description="Helical" evidence="1">
    <location>
        <begin position="374"/>
        <end position="394"/>
    </location>
</feature>
<feature type="transmembrane region" description="Helical" evidence="1">
    <location>
        <begin position="403"/>
        <end position="423"/>
    </location>
</feature>
<feature type="transmembrane region" description="Helical" evidence="1">
    <location>
        <begin position="435"/>
        <end position="455"/>
    </location>
</feature>
<feature type="sequence conflict" description="In Ref. 3; AAK25964." evidence="3" ref="3">
    <original>C</original>
    <variation>F</variation>
    <location>
        <position position="264"/>
    </location>
</feature>
<proteinExistence type="evidence at transcript level"/>